<proteinExistence type="inferred from homology"/>
<gene>
    <name type="primary">SSH4</name>
    <name type="ORF">Kpol_1018p163</name>
</gene>
<accession>A7TE03</accession>
<comment type="function">
    <text evidence="1">Components of the endosome-vacuole trafficking pathway that regulates nutrient transport. May be involved in processes which determine whether plasma membrane proteins are degraded or routed to the plasma membrane (By similarity).</text>
</comment>
<comment type="subcellular location">
    <subcellularLocation>
        <location evidence="1">Vacuole membrane</location>
        <topology evidence="1">Single-pass type II membrane protein</topology>
    </subcellularLocation>
    <subcellularLocation>
        <location evidence="1">Endosome membrane</location>
        <topology evidence="1">Single-pass type II membrane protein</topology>
    </subcellularLocation>
</comment>
<comment type="similarity">
    <text evidence="5">Belongs to the SSH4 family.</text>
</comment>
<reference key="1">
    <citation type="journal article" date="2007" name="Proc. Natl. Acad. Sci. U.S.A.">
        <title>Independent sorting-out of thousands of duplicated gene pairs in two yeast species descended from a whole-genome duplication.</title>
        <authorList>
            <person name="Scannell D.R."/>
            <person name="Frank A.C."/>
            <person name="Conant G.C."/>
            <person name="Byrne K.P."/>
            <person name="Woolfit M."/>
            <person name="Wolfe K.H."/>
        </authorList>
    </citation>
    <scope>NUCLEOTIDE SEQUENCE [LARGE SCALE GENOMIC DNA]</scope>
    <source>
        <strain>ATCC 22028 / DSM 70294 / BCRC 21397 / CBS 2163 / NBRC 10782 / NRRL Y-8283 / UCD 57-17</strain>
    </source>
</reference>
<keyword id="KW-0967">Endosome</keyword>
<keyword id="KW-0325">Glycoprotein</keyword>
<keyword id="KW-0472">Membrane</keyword>
<keyword id="KW-0653">Protein transport</keyword>
<keyword id="KW-1185">Reference proteome</keyword>
<keyword id="KW-0735">Signal-anchor</keyword>
<keyword id="KW-0812">Transmembrane</keyword>
<keyword id="KW-1133">Transmembrane helix</keyword>
<keyword id="KW-0813">Transport</keyword>
<keyword id="KW-0926">Vacuole</keyword>
<protein>
    <recommendedName>
        <fullName>Protein SSH4</fullName>
    </recommendedName>
</protein>
<feature type="chain" id="PRO_0000324486" description="Protein SSH4">
    <location>
        <begin position="1"/>
        <end position="556"/>
    </location>
</feature>
<feature type="topological domain" description="Cytoplasmic" evidence="2">
    <location>
        <begin position="1"/>
        <end position="59"/>
    </location>
</feature>
<feature type="transmembrane region" description="Helical; Signal-anchor for type II membrane protein" evidence="2">
    <location>
        <begin position="60"/>
        <end position="80"/>
    </location>
</feature>
<feature type="topological domain" description="Lumenal" evidence="2">
    <location>
        <begin position="81"/>
        <end position="556"/>
    </location>
</feature>
<feature type="domain" description="B30.2/SPRY" evidence="3">
    <location>
        <begin position="127"/>
        <end position="323"/>
    </location>
</feature>
<feature type="region of interest" description="Disordered" evidence="4">
    <location>
        <begin position="500"/>
        <end position="556"/>
    </location>
</feature>
<feature type="compositionally biased region" description="Basic and acidic residues" evidence="4">
    <location>
        <begin position="500"/>
        <end position="521"/>
    </location>
</feature>
<feature type="compositionally biased region" description="Low complexity" evidence="4">
    <location>
        <begin position="528"/>
        <end position="542"/>
    </location>
</feature>
<feature type="compositionally biased region" description="Basic residues" evidence="4">
    <location>
        <begin position="543"/>
        <end position="556"/>
    </location>
</feature>
<feature type="glycosylation site" description="N-linked (GlcNAc...) asparagine" evidence="2">
    <location>
        <position position="163"/>
    </location>
</feature>
<feature type="glycosylation site" description="N-linked (GlcNAc...) asparagine" evidence="2">
    <location>
        <position position="212"/>
    </location>
</feature>
<feature type="glycosylation site" description="N-linked (GlcNAc...) asparagine" evidence="2">
    <location>
        <position position="338"/>
    </location>
</feature>
<feature type="glycosylation site" description="N-linked (GlcNAc...) asparagine" evidence="2">
    <location>
        <position position="510"/>
    </location>
</feature>
<feature type="glycosylation site" description="N-linked (GlcNAc...) asparagine" evidence="2">
    <location>
        <position position="523"/>
    </location>
</feature>
<feature type="glycosylation site" description="N-linked (GlcNAc...) asparagine" evidence="2">
    <location>
        <position position="528"/>
    </location>
</feature>
<feature type="glycosylation site" description="N-linked (GlcNAc...) asparagine" evidence="2">
    <location>
        <position position="533"/>
    </location>
</feature>
<dbReference type="EMBL" id="DS480378">
    <property type="protein sequence ID" value="EDO19623.1"/>
    <property type="molecule type" value="Genomic_DNA"/>
</dbReference>
<dbReference type="RefSeq" id="XP_001647481.1">
    <property type="nucleotide sequence ID" value="XM_001647431.1"/>
</dbReference>
<dbReference type="FunCoup" id="A7TE03">
    <property type="interactions" value="38"/>
</dbReference>
<dbReference type="STRING" id="436907.A7TE03"/>
<dbReference type="GlyCosmos" id="A7TE03">
    <property type="glycosylation" value="7 sites, No reported glycans"/>
</dbReference>
<dbReference type="GeneID" id="5547987"/>
<dbReference type="KEGG" id="vpo:Kpol_1018p163"/>
<dbReference type="eggNOG" id="KOG1477">
    <property type="taxonomic scope" value="Eukaryota"/>
</dbReference>
<dbReference type="HOGENOM" id="CLU_026177_0_0_1"/>
<dbReference type="InParanoid" id="A7TE03"/>
<dbReference type="OMA" id="FIKDRGI"/>
<dbReference type="OrthoDB" id="258495at2759"/>
<dbReference type="PhylomeDB" id="A7TE03"/>
<dbReference type="Proteomes" id="UP000000267">
    <property type="component" value="Unassembled WGS sequence"/>
</dbReference>
<dbReference type="GO" id="GO:0010008">
    <property type="term" value="C:endosome membrane"/>
    <property type="evidence" value="ECO:0007669"/>
    <property type="project" value="UniProtKB-SubCell"/>
</dbReference>
<dbReference type="GO" id="GO:0000324">
    <property type="term" value="C:fungal-type vacuole"/>
    <property type="evidence" value="ECO:0007669"/>
    <property type="project" value="EnsemblFungi"/>
</dbReference>
<dbReference type="GO" id="GO:0005774">
    <property type="term" value="C:vacuolar membrane"/>
    <property type="evidence" value="ECO:0007669"/>
    <property type="project" value="UniProtKB-SubCell"/>
</dbReference>
<dbReference type="GO" id="GO:1990756">
    <property type="term" value="F:ubiquitin-like ligase-substrate adaptor activity"/>
    <property type="evidence" value="ECO:0007669"/>
    <property type="project" value="EnsemblFungi"/>
</dbReference>
<dbReference type="GO" id="GO:0043328">
    <property type="term" value="P:protein transport to vacuole involved in ubiquitin-dependent protein catabolic process via the multivesicular body sorting pathway"/>
    <property type="evidence" value="ECO:0007669"/>
    <property type="project" value="EnsemblFungi"/>
</dbReference>
<dbReference type="Gene3D" id="2.60.120.920">
    <property type="match status" value="1"/>
</dbReference>
<dbReference type="InterPro" id="IPR001870">
    <property type="entry name" value="B30.2/SPRY"/>
</dbReference>
<dbReference type="InterPro" id="IPR043136">
    <property type="entry name" value="B30.2/SPRY_sf"/>
</dbReference>
<dbReference type="InterPro" id="IPR013320">
    <property type="entry name" value="ConA-like_dom_sf"/>
</dbReference>
<dbReference type="InterPro" id="IPR003877">
    <property type="entry name" value="SPRY_dom"/>
</dbReference>
<dbReference type="InterPro" id="IPR050618">
    <property type="entry name" value="Ubq-SigPath_Reg"/>
</dbReference>
<dbReference type="PANTHER" id="PTHR12864">
    <property type="entry name" value="RAN BINDING PROTEIN 9-RELATED"/>
    <property type="match status" value="1"/>
</dbReference>
<dbReference type="Pfam" id="PF00622">
    <property type="entry name" value="SPRY"/>
    <property type="match status" value="1"/>
</dbReference>
<dbReference type="SMART" id="SM00449">
    <property type="entry name" value="SPRY"/>
    <property type="match status" value="1"/>
</dbReference>
<dbReference type="SUPFAM" id="SSF49899">
    <property type="entry name" value="Concanavalin A-like lectins/glucanases"/>
    <property type="match status" value="1"/>
</dbReference>
<dbReference type="PROSITE" id="PS50188">
    <property type="entry name" value="B302_SPRY"/>
    <property type="match status" value="1"/>
</dbReference>
<sequence>MMIIEGDISGQEAVKNVIYGTFLPVDDPYPVTPPIDHDNETVSLAFLISLSVTFALLMILLVATAAYVMFCGADEAEYDEETGEGSSSSVTGIHTFFGKKGGGILLDSTFCSPGQFDDEEALREQEEQELPKMSKFEIELYKRSREFQNLNPPLVKEFGTYLNTSDRQFIKDRGIQSYYFYPSINDNVDKYGNFLPSFLVQDKLDVTFTEYNKSSSTLLNYPLPFNKKEAVYFEVKIFKFPTNSNTIFSIGLVTCPYPYFRIPGMSRYSIAYESTGKLRINNPFGASTLLPRLQEGDVVGFGYRYKMGTVFITHNGKKMMDVTHNVGVDLFVGLGALNASYTRTYTKDGLLEDPDNVDIREALSQGREVELPDAIQKVYDPENLTPVAADEVELQVNLGQVGFVFIEANVKKYGFGSVLGEIGIPPAYNGDEIKRNAIIQKGEEMPPKYGFEEGDRNSFFGDIHIYEGHHQLEAEELPEGNGGVTTTQDAGARAATDYERVSSAFDRENNDTTKDPADEILHNQTAANTTKPNKTSNNNNKNHNNKKRNKRNKRRK</sequence>
<name>SSH4_VANPO</name>
<organism>
    <name type="scientific">Vanderwaltozyma polyspora (strain ATCC 22028 / DSM 70294 / BCRC 21397 / CBS 2163 / NBRC 10782 / NRRL Y-8283 / UCD 57-17)</name>
    <name type="common">Kluyveromyces polysporus</name>
    <dbReference type="NCBI Taxonomy" id="436907"/>
    <lineage>
        <taxon>Eukaryota</taxon>
        <taxon>Fungi</taxon>
        <taxon>Dikarya</taxon>
        <taxon>Ascomycota</taxon>
        <taxon>Saccharomycotina</taxon>
        <taxon>Saccharomycetes</taxon>
        <taxon>Saccharomycetales</taxon>
        <taxon>Saccharomycetaceae</taxon>
        <taxon>Vanderwaltozyma</taxon>
    </lineage>
</organism>
<evidence type="ECO:0000250" key="1"/>
<evidence type="ECO:0000255" key="2"/>
<evidence type="ECO:0000255" key="3">
    <source>
        <dbReference type="PROSITE-ProRule" id="PRU00548"/>
    </source>
</evidence>
<evidence type="ECO:0000256" key="4">
    <source>
        <dbReference type="SAM" id="MobiDB-lite"/>
    </source>
</evidence>
<evidence type="ECO:0000305" key="5"/>